<sequence length="565" mass="63230">MKARLLVLLCALAATDADTICIGYHANNSTDTVDTVLEKNVTVTHSVNLLEDSHNGKLCRLKGIAPLQLGKCNIAGWILGNPECESLLSERSWSYIVETPNSENGTCYPGDFIDYEELREQLSSVSSFERFEIFSKESSWPKHTTGGVTAACSHAGKSSFYRNLLWLTEKDGSYPNLNNSYVNKKGKEVLVLWGVHHPSNIKDQQTLYQKENAYVSVVSSNYNRRFTPEIAERPKVRGQAGRINYYWTLLKPGDTIMFEANGNLIAPWYAFALSRGFGSGIITSNASMHECDTKCQTPQGAINSSLPFQNIHPVTIGECPKYVRSTKLRMVTGLRNIPSIQSRGLFGAIAGFIEGGWTGMIDGWYGYHHQNEQGSGYAADQKSTQNAINGITNKVNSVIEKMNTQFTAVGKEFNNLEKRMENLNKKVDDGFLDIWTYNAELLVLLENERTLDFHDSNVKNLYEKVKNQLRNNAKEIGNGCFEFYHKCNNECMESVKNGTYDYPKYSEESKLNREKIDGVKLESMGVYQILAIYSTAASSLVLLVSLGAISFWMCSNGSLQCRICI</sequence>
<keyword id="KW-1167">Clathrin- and caveolin-independent endocytosis of virus by host</keyword>
<keyword id="KW-1165">Clathrin-mediated endocytosis of virus by host</keyword>
<keyword id="KW-1015">Disulfide bond</keyword>
<keyword id="KW-1170">Fusion of virus membrane with host endosomal membrane</keyword>
<keyword id="KW-1168">Fusion of virus membrane with host membrane</keyword>
<keyword id="KW-0325">Glycoprotein</keyword>
<keyword id="KW-0348">Hemagglutinin</keyword>
<keyword id="KW-1032">Host cell membrane</keyword>
<keyword id="KW-1043">Host membrane</keyword>
<keyword id="KW-0945">Host-virus interaction</keyword>
<keyword id="KW-0449">Lipoprotein</keyword>
<keyword id="KW-0472">Membrane</keyword>
<keyword id="KW-0564">Palmitate</keyword>
<keyword id="KW-0732">Signal</keyword>
<keyword id="KW-0812">Transmembrane</keyword>
<keyword id="KW-1133">Transmembrane helix</keyword>
<keyword id="KW-1161">Viral attachment to host cell</keyword>
<keyword id="KW-0261">Viral envelope protein</keyword>
<keyword id="KW-1162">Viral penetration into host cytoplasm</keyword>
<keyword id="KW-0946">Virion</keyword>
<keyword id="KW-1164">Virus endocytosis by host</keyword>
<keyword id="KW-1160">Virus entry into host cell</keyword>
<proteinExistence type="inferred from homology"/>
<protein>
    <recommendedName>
        <fullName evidence="2">Hemagglutinin</fullName>
    </recommendedName>
    <component>
        <recommendedName>
            <fullName evidence="2">Hemagglutinin HA1 chain</fullName>
        </recommendedName>
    </component>
    <component>
        <recommendedName>
            <fullName evidence="2">Hemagglutinin HA2 chain</fullName>
        </recommendedName>
    </component>
</protein>
<name>HEMA_I43A0</name>
<feature type="signal peptide" evidence="2">
    <location>
        <begin position="1"/>
        <end position="17"/>
    </location>
</feature>
<feature type="chain" id="PRO_0000440381" description="Hemagglutinin" evidence="2">
    <location>
        <begin position="18"/>
        <end position="565"/>
    </location>
</feature>
<feature type="chain" id="PRO_0000372879" description="Hemagglutinin HA1 chain" evidence="2">
    <location>
        <begin position="18"/>
        <end position="342"/>
    </location>
</feature>
<feature type="chain" id="PRO_0000372880" description="Hemagglutinin HA2 chain" evidence="2">
    <location>
        <begin position="344"/>
        <end position="565"/>
    </location>
</feature>
<feature type="topological domain" description="Extracellular" evidence="2">
    <location>
        <begin position="18"/>
        <end position="528"/>
    </location>
</feature>
<feature type="transmembrane region" description="Helical" evidence="2">
    <location>
        <begin position="529"/>
        <end position="549"/>
    </location>
</feature>
<feature type="topological domain" description="Cytoplasmic" evidence="2">
    <location>
        <begin position="550"/>
        <end position="565"/>
    </location>
</feature>
<feature type="site" description="Cleavage; by host" evidence="2">
    <location>
        <begin position="343"/>
        <end position="344"/>
    </location>
</feature>
<feature type="lipid moiety-binding region" description="S-palmitoyl cysteine; by host" evidence="2">
    <location>
        <position position="554"/>
    </location>
</feature>
<feature type="lipid moiety-binding region" description="S-palmitoyl cysteine; by host" evidence="2">
    <location>
        <position position="561"/>
    </location>
</feature>
<feature type="lipid moiety-binding region" description="S-palmitoyl cysteine; by host" evidence="2">
    <location>
        <position position="564"/>
    </location>
</feature>
<feature type="glycosylation site" description="N-linked (GlcNAc...) asparagine; by host" evidence="2">
    <location>
        <position position="27"/>
    </location>
</feature>
<feature type="glycosylation site" description="N-linked (GlcNAc...) asparagine; by host" evidence="2">
    <location>
        <position position="28"/>
    </location>
</feature>
<feature type="glycosylation site" description="N-linked (GlcNAc...) asparagine; by host" evidence="2">
    <location>
        <position position="40"/>
    </location>
</feature>
<feature type="glycosylation site" description="N-linked (GlcNAc...) asparagine; by host" evidence="2">
    <location>
        <position position="104"/>
    </location>
</feature>
<feature type="glycosylation site" description="N-linked (GlcNAc...) asparagine; by host" evidence="2">
    <location>
        <position position="178"/>
    </location>
</feature>
<feature type="glycosylation site" description="N-linked (GlcNAc...) asparagine; by host" evidence="2">
    <location>
        <position position="285"/>
    </location>
</feature>
<feature type="glycosylation site" description="N-linked (GlcNAc...) asparagine; by host" evidence="2">
    <location>
        <position position="303"/>
    </location>
</feature>
<feature type="glycosylation site" description="N-linked (GlcNAc...) asparagine; by host" evidence="2">
    <location>
        <position position="497"/>
    </location>
</feature>
<feature type="disulfide bond" description="Interchain (between HA1 and HA2 chains)" evidence="2">
    <location>
        <begin position="21"/>
        <end position="480"/>
    </location>
</feature>
<feature type="disulfide bond" evidence="2">
    <location>
        <begin position="59"/>
        <end position="291"/>
    </location>
</feature>
<feature type="disulfide bond" evidence="2">
    <location>
        <begin position="72"/>
        <end position="84"/>
    </location>
</feature>
<feature type="disulfide bond" evidence="2">
    <location>
        <begin position="107"/>
        <end position="152"/>
    </location>
</feature>
<feature type="disulfide bond" evidence="2">
    <location>
        <begin position="295"/>
        <end position="319"/>
    </location>
</feature>
<feature type="disulfide bond" evidence="2">
    <location>
        <begin position="487"/>
        <end position="491"/>
    </location>
</feature>
<evidence type="ECO:0000250" key="1">
    <source>
        <dbReference type="UniProtKB" id="Q289M7"/>
    </source>
</evidence>
<evidence type="ECO:0000255" key="2">
    <source>
        <dbReference type="HAMAP-Rule" id="MF_04072"/>
    </source>
</evidence>
<evidence type="ECO:0000305" key="3"/>
<reference key="1">
    <citation type="submission" date="2007-03" db="EMBL/GenBank/DDBJ databases">
        <title>The NIAID influenza genome sequencing project.</title>
        <authorList>
            <person name="Ghedin E."/>
            <person name="Spiro D."/>
            <person name="Miller N."/>
            <person name="Zaborsky J."/>
            <person name="Feldblyum T."/>
            <person name="Subbu V."/>
            <person name="Shumway M."/>
            <person name="Sparenborg J."/>
            <person name="Groveman L."/>
            <person name="Halpin R."/>
            <person name="Sitz J."/>
            <person name="Koo H."/>
            <person name="Salzberg S.L."/>
            <person name="Webster R.G."/>
            <person name="Hoffmann E."/>
            <person name="Krauss S."/>
            <person name="Naeve C."/>
            <person name="Bao Y."/>
            <person name="Bolotov P."/>
            <person name="Dernovoy D."/>
            <person name="Kiryutin B."/>
            <person name="Lipman D.J."/>
            <person name="Tatusova T."/>
        </authorList>
    </citation>
    <scope>NUCLEOTIDE SEQUENCE [GENOMIC RNA]</scope>
</reference>
<reference key="2">
    <citation type="submission" date="2007-03" db="EMBL/GenBank/DDBJ databases">
        <authorList>
            <consortium name="The NIAID Influenza Genome Sequencing Consortium"/>
        </authorList>
    </citation>
    <scope>NUCLEOTIDE SEQUENCE [GENOMIC RNA]</scope>
</reference>
<gene>
    <name evidence="2" type="primary">HA</name>
</gene>
<organism>
    <name type="scientific">Influenza A virus (strain A/USA:Iowa/1943 H1N1)</name>
    <dbReference type="NCBI Taxonomy" id="425563"/>
    <lineage>
        <taxon>Viruses</taxon>
        <taxon>Riboviria</taxon>
        <taxon>Orthornavirae</taxon>
        <taxon>Negarnaviricota</taxon>
        <taxon>Polyploviricotina</taxon>
        <taxon>Insthoviricetes</taxon>
        <taxon>Articulavirales</taxon>
        <taxon>Orthomyxoviridae</taxon>
        <taxon>Alphainfluenzavirus</taxon>
        <taxon>Alphainfluenzavirus influenzae</taxon>
        <taxon>Influenza A virus</taxon>
    </lineage>
</organism>
<dbReference type="EMBL" id="CY020461">
    <property type="protein sequence ID" value="ABO38373.1"/>
    <property type="molecule type" value="Viral_cRNA"/>
</dbReference>
<dbReference type="EMDB" id="EMD-40557"/>
<dbReference type="SMR" id="A4GCK8"/>
<dbReference type="GlyCosmos" id="A4GCK8">
    <property type="glycosylation" value="8 sites, No reported glycans"/>
</dbReference>
<dbReference type="PRO" id="PR:A4GCK8"/>
<dbReference type="Proteomes" id="UP000008432">
    <property type="component" value="Genome"/>
</dbReference>
<dbReference type="GO" id="GO:0020002">
    <property type="term" value="C:host cell plasma membrane"/>
    <property type="evidence" value="ECO:0007669"/>
    <property type="project" value="UniProtKB-SubCell"/>
</dbReference>
<dbReference type="GO" id="GO:0016020">
    <property type="term" value="C:membrane"/>
    <property type="evidence" value="ECO:0007669"/>
    <property type="project" value="UniProtKB-UniRule"/>
</dbReference>
<dbReference type="GO" id="GO:0019031">
    <property type="term" value="C:viral envelope"/>
    <property type="evidence" value="ECO:0007669"/>
    <property type="project" value="UniProtKB-UniRule"/>
</dbReference>
<dbReference type="GO" id="GO:0055036">
    <property type="term" value="C:virion membrane"/>
    <property type="evidence" value="ECO:0007669"/>
    <property type="project" value="UniProtKB-SubCell"/>
</dbReference>
<dbReference type="GO" id="GO:0046789">
    <property type="term" value="F:host cell surface receptor binding"/>
    <property type="evidence" value="ECO:0007669"/>
    <property type="project" value="UniProtKB-UniRule"/>
</dbReference>
<dbReference type="GO" id="GO:0075512">
    <property type="term" value="P:clathrin-dependent endocytosis of virus by host cell"/>
    <property type="evidence" value="ECO:0007669"/>
    <property type="project" value="UniProtKB-UniRule"/>
</dbReference>
<dbReference type="GO" id="GO:0039654">
    <property type="term" value="P:fusion of virus membrane with host endosome membrane"/>
    <property type="evidence" value="ECO:0007669"/>
    <property type="project" value="UniProtKB-UniRule"/>
</dbReference>
<dbReference type="GO" id="GO:0019064">
    <property type="term" value="P:fusion of virus membrane with host plasma membrane"/>
    <property type="evidence" value="ECO:0007669"/>
    <property type="project" value="InterPro"/>
</dbReference>
<dbReference type="GO" id="GO:0046761">
    <property type="term" value="P:viral budding from plasma membrane"/>
    <property type="evidence" value="ECO:0007669"/>
    <property type="project" value="UniProtKB-UniRule"/>
</dbReference>
<dbReference type="GO" id="GO:0019062">
    <property type="term" value="P:virion attachment to host cell"/>
    <property type="evidence" value="ECO:0007669"/>
    <property type="project" value="UniProtKB-KW"/>
</dbReference>
<dbReference type="FunFam" id="3.90.20.10:FF:000002">
    <property type="entry name" value="Hemagglutinin"/>
    <property type="match status" value="1"/>
</dbReference>
<dbReference type="Gene3D" id="3.90.20.10">
    <property type="match status" value="1"/>
</dbReference>
<dbReference type="Gene3D" id="3.90.209.20">
    <property type="match status" value="1"/>
</dbReference>
<dbReference type="Gene3D" id="2.10.77.10">
    <property type="entry name" value="Hemagglutinin Chain A, Domain 2"/>
    <property type="match status" value="1"/>
</dbReference>
<dbReference type="HAMAP" id="MF_04072">
    <property type="entry name" value="INFV_HEMA"/>
    <property type="match status" value="1"/>
</dbReference>
<dbReference type="InterPro" id="IPR008980">
    <property type="entry name" value="Capsid_hemagglutn"/>
</dbReference>
<dbReference type="InterPro" id="IPR013828">
    <property type="entry name" value="Hemagglutn_HA1_a/b_dom_sf"/>
</dbReference>
<dbReference type="InterPro" id="IPR000149">
    <property type="entry name" value="Hemagglutn_influenz_A"/>
</dbReference>
<dbReference type="InterPro" id="IPR001364">
    <property type="entry name" value="Hemagglutn_influenz_A/B"/>
</dbReference>
<dbReference type="Pfam" id="PF00509">
    <property type="entry name" value="Hemagglutinin"/>
    <property type="match status" value="1"/>
</dbReference>
<dbReference type="PRINTS" id="PR00330">
    <property type="entry name" value="HEMAGGLUTN1"/>
</dbReference>
<dbReference type="PRINTS" id="PR00329">
    <property type="entry name" value="HEMAGGLUTN12"/>
</dbReference>
<dbReference type="SUPFAM" id="SSF58064">
    <property type="entry name" value="Influenza hemagglutinin (stalk)"/>
    <property type="match status" value="1"/>
</dbReference>
<dbReference type="SUPFAM" id="SSF49818">
    <property type="entry name" value="Viral protein domain"/>
    <property type="match status" value="1"/>
</dbReference>
<comment type="function">
    <text evidence="2">Binds to sialic acid-containing receptors on the cell surface, bringing about the attachment of the virus particle to the cell. This attachment induces virion internalization either through clathrin-dependent endocytosis or through clathrin- and caveolin-independent pathway. Plays a major role in the determination of host range restriction and virulence. Class I viral fusion protein. Responsible for penetration of the virus into the cell cytoplasm by mediating the fusion of the membrane of the endocytosed virus particle with the endosomal membrane. Low pH in endosomes induces an irreversible conformational change in HA2, releasing the fusion hydrophobic peptide. Several trimers are required to form a competent fusion pore.</text>
</comment>
<comment type="subunit">
    <text evidence="1">Homotrimer of disulfide-linked HA1-HA2. Interacts with human CACNA1C.</text>
</comment>
<comment type="subcellular location">
    <subcellularLocation>
        <location evidence="2">Virion membrane</location>
        <topology evidence="2">Single-pass type I membrane protein</topology>
    </subcellularLocation>
    <subcellularLocation>
        <location evidence="2">Host apical cell membrane</location>
        <topology evidence="2">Single-pass type I membrane protein</topology>
    </subcellularLocation>
    <text evidence="2">Targeted to the apical plasma membrane in epithelial polarized cells through a signal present in the transmembrane domain. Associated with glycosphingolipid- and cholesterol-enriched detergent-resistant lipid rafts.</text>
</comment>
<comment type="PTM">
    <text evidence="2">Palmitoylated.</text>
</comment>
<comment type="PTM">
    <text evidence="2">In natural infection, inactive HA is matured into HA1 and HA2 outside the cell by one or more trypsin-like, arginine-specific endoprotease secreted by the bronchial epithelial cells. One identified protease that may be involved in this process is secreted in lungs by club cells.</text>
</comment>
<comment type="miscellaneous">
    <text>Major glycoprotein, comprises over 80% of the envelope proteins present in virus particle.</text>
</comment>
<comment type="miscellaneous">
    <text>The extent of infection into host organism is determined by HA. Influenza viruses bud from the apical surface of polarized epithelial cells (e.g. bronchial epithelial cells) into lumen of lungs and are therefore usually pneumotropic. The reason is that HA is cleaved by tryptase clara which is restricted to lungs. However, HAs of H5 and H7 pantropic avian viruses subtypes can be cleaved by furin and subtilisin-type enzymes, allowing the virus to grow in other organs than lungs.</text>
</comment>
<comment type="miscellaneous">
    <text evidence="3">The influenza A genome consist of 8 RNA segments. Genetic variation of hemagglutinin and/or neuraminidase genes results in the emergence of new influenza strains. The mechanism of variation can be the result of point mutations or the result of genetic reassortment between segments of two different strains.</text>
</comment>
<comment type="similarity">
    <text evidence="2">Belongs to the influenza viruses hemagglutinin family.</text>
</comment>
<organismHost>
    <name type="scientific">Aves</name>
    <dbReference type="NCBI Taxonomy" id="8782"/>
</organismHost>
<organismHost>
    <name type="scientific">Homo sapiens</name>
    <name type="common">Human</name>
    <dbReference type="NCBI Taxonomy" id="9606"/>
</organismHost>
<organismHost>
    <name type="scientific">Sus scrofa</name>
    <name type="common">Pig</name>
    <dbReference type="NCBI Taxonomy" id="9823"/>
</organismHost>
<accession>A4GCK8</accession>